<keyword id="KW-0030">Aminoacyl-tRNA synthetase</keyword>
<keyword id="KW-0067">ATP-binding</keyword>
<keyword id="KW-0963">Cytoplasm</keyword>
<keyword id="KW-0436">Ligase</keyword>
<keyword id="KW-0479">Metal-binding</keyword>
<keyword id="KW-0547">Nucleotide-binding</keyword>
<keyword id="KW-0648">Protein biosynthesis</keyword>
<keyword id="KW-1185">Reference proteome</keyword>
<keyword id="KW-0694">RNA-binding</keyword>
<keyword id="KW-0820">tRNA-binding</keyword>
<keyword id="KW-0862">Zinc</keyword>
<proteinExistence type="inferred from homology"/>
<sequence length="890" mass="96039">MPSLNDIRSTFLNYFAKQGHTIVPSSPLVPRNDPTLMFTNSGMVQFKNCFTGVDKRDYVRATTAQKCVRAGGKHNDLDNVGYTARHHTFFEMLGNFSFGDYFKSEAIPFAWELITRDFDIPKDRLYTTVYHTDDEAFEIWKKVGVPESRIIRIATSDNFWQMGPTGPCGPCTEIFYDHGDHIWGGPPGSPEEDGDRFIEIWNIVFMQNEKFEDGSMVDLDMQSIDTGMGLERIGALLQGSHDNYDTDLFKALIEASADATSVDPYGDQNVHHRVIADHLRSTSFLIADGVMPSNDGRGYVLRRIMRRAMRHAHLLGAKDPVMHRLVRTLVGQMGAAYPELGRAQALIEETLLLEETRFKQTLDRGLKLLDDELTALPEEAPLPGEAAFKLYDTYGFPLDLTQDALREKGRKVDTDGFDAAMAEQKAKARAAWAGSGESTDNAIWFDVLDVAGATDFLGYDTEKAEGQALALVVDGALSDRIAEGGSGWVVTNQTPFYGESGGQVGDTGVIRRLENRDHVALVEDSRKFADGKVYAHKVTMERGALAKGDAVELEVDHARRSAIRANHSATHLLHEALREALGDHVAQRGSLNAADRLRFDFSHAKALTEAELAQVGAEVNRFIRQNSRVETRIMTPDDARAIGAQALFGEKYGDEVRVVSMGRAETGKGADGKTWSIELCGGTHVAQTGDIGMFVLLGDSASSAGVRRIEALTGQAAFDHLSQEGARLSQVTAMLKAQPAEVAERVRALMDERKALQNEVAQLRRDLAMAGGAGQGGGAETHEVGGVPFLAQVLSGVSGKDLPALIDEHKSRMGSGAVLLIADAGGKAAVAAGVTEDLTARVSAVDLVKAAVAALGGKGGGGRPDMAQGGGQDAGKADAAIKAAEQVLGG</sequence>
<accession>Q5LRU1</accession>
<comment type="function">
    <text evidence="1">Catalyzes the attachment of alanine to tRNA(Ala) in a two-step reaction: alanine is first activated by ATP to form Ala-AMP and then transferred to the acceptor end of tRNA(Ala). Also edits incorrectly charged Ser-tRNA(Ala) and Gly-tRNA(Ala) via its editing domain.</text>
</comment>
<comment type="catalytic activity">
    <reaction evidence="1">
        <text>tRNA(Ala) + L-alanine + ATP = L-alanyl-tRNA(Ala) + AMP + diphosphate</text>
        <dbReference type="Rhea" id="RHEA:12540"/>
        <dbReference type="Rhea" id="RHEA-COMP:9657"/>
        <dbReference type="Rhea" id="RHEA-COMP:9923"/>
        <dbReference type="ChEBI" id="CHEBI:30616"/>
        <dbReference type="ChEBI" id="CHEBI:33019"/>
        <dbReference type="ChEBI" id="CHEBI:57972"/>
        <dbReference type="ChEBI" id="CHEBI:78442"/>
        <dbReference type="ChEBI" id="CHEBI:78497"/>
        <dbReference type="ChEBI" id="CHEBI:456215"/>
        <dbReference type="EC" id="6.1.1.7"/>
    </reaction>
</comment>
<comment type="cofactor">
    <cofactor evidence="1">
        <name>Zn(2+)</name>
        <dbReference type="ChEBI" id="CHEBI:29105"/>
    </cofactor>
    <text evidence="1">Binds 1 zinc ion per subunit.</text>
</comment>
<comment type="subcellular location">
    <subcellularLocation>
        <location evidence="1">Cytoplasm</location>
    </subcellularLocation>
</comment>
<comment type="domain">
    <text evidence="1">Consists of three domains; the N-terminal catalytic domain, the editing domain and the C-terminal C-Ala domain. The editing domain removes incorrectly charged amino acids, while the C-Ala domain, along with tRNA(Ala), serves as a bridge to cooperatively bring together the editing and aminoacylation centers thus stimulating deacylation of misacylated tRNAs.</text>
</comment>
<comment type="similarity">
    <text evidence="1">Belongs to the class-II aminoacyl-tRNA synthetase family.</text>
</comment>
<evidence type="ECO:0000255" key="1">
    <source>
        <dbReference type="HAMAP-Rule" id="MF_00036"/>
    </source>
</evidence>
<name>SYA_RUEPO</name>
<gene>
    <name evidence="1" type="primary">alaS</name>
    <name type="ordered locus">SPO2033</name>
</gene>
<protein>
    <recommendedName>
        <fullName evidence="1">Alanine--tRNA ligase</fullName>
        <ecNumber evidence="1">6.1.1.7</ecNumber>
    </recommendedName>
    <alternativeName>
        <fullName evidence="1">Alanyl-tRNA synthetase</fullName>
        <shortName evidence="1">AlaRS</shortName>
    </alternativeName>
</protein>
<reference key="1">
    <citation type="journal article" date="2004" name="Nature">
        <title>Genome sequence of Silicibacter pomeroyi reveals adaptations to the marine environment.</title>
        <authorList>
            <person name="Moran M.A."/>
            <person name="Buchan A."/>
            <person name="Gonzalez J.M."/>
            <person name="Heidelberg J.F."/>
            <person name="Whitman W.B."/>
            <person name="Kiene R.P."/>
            <person name="Henriksen J.R."/>
            <person name="King G.M."/>
            <person name="Belas R."/>
            <person name="Fuqua C."/>
            <person name="Brinkac L.M."/>
            <person name="Lewis M."/>
            <person name="Johri S."/>
            <person name="Weaver B."/>
            <person name="Pai G."/>
            <person name="Eisen J.A."/>
            <person name="Rahe E."/>
            <person name="Sheldon W.M."/>
            <person name="Ye W."/>
            <person name="Miller T.R."/>
            <person name="Carlton J."/>
            <person name="Rasko D.A."/>
            <person name="Paulsen I.T."/>
            <person name="Ren Q."/>
            <person name="Daugherty S.C."/>
            <person name="DeBoy R.T."/>
            <person name="Dodson R.J."/>
            <person name="Durkin A.S."/>
            <person name="Madupu R."/>
            <person name="Nelson W.C."/>
            <person name="Sullivan S.A."/>
            <person name="Rosovitz M.J."/>
            <person name="Haft D.H."/>
            <person name="Selengut J."/>
            <person name="Ward N."/>
        </authorList>
    </citation>
    <scope>NUCLEOTIDE SEQUENCE [LARGE SCALE GENOMIC DNA]</scope>
    <source>
        <strain>ATCC 700808 / DSM 15171 / DSS-3</strain>
    </source>
</reference>
<reference key="2">
    <citation type="journal article" date="2014" name="Stand. Genomic Sci.">
        <title>An updated genome annotation for the model marine bacterium Ruegeria pomeroyi DSS-3.</title>
        <authorList>
            <person name="Rivers A.R."/>
            <person name="Smith C.B."/>
            <person name="Moran M.A."/>
        </authorList>
    </citation>
    <scope>GENOME REANNOTATION</scope>
    <source>
        <strain>ATCC 700808 / DSM 15171 / DSS-3</strain>
    </source>
</reference>
<feature type="chain" id="PRO_0000075200" description="Alanine--tRNA ligase">
    <location>
        <begin position="1"/>
        <end position="890"/>
    </location>
</feature>
<feature type="binding site" evidence="1">
    <location>
        <position position="567"/>
    </location>
    <ligand>
        <name>Zn(2+)</name>
        <dbReference type="ChEBI" id="CHEBI:29105"/>
    </ligand>
</feature>
<feature type="binding site" evidence="1">
    <location>
        <position position="571"/>
    </location>
    <ligand>
        <name>Zn(2+)</name>
        <dbReference type="ChEBI" id="CHEBI:29105"/>
    </ligand>
</feature>
<feature type="binding site" evidence="1">
    <location>
        <position position="680"/>
    </location>
    <ligand>
        <name>Zn(2+)</name>
        <dbReference type="ChEBI" id="CHEBI:29105"/>
    </ligand>
</feature>
<feature type="binding site" evidence="1">
    <location>
        <position position="684"/>
    </location>
    <ligand>
        <name>Zn(2+)</name>
        <dbReference type="ChEBI" id="CHEBI:29105"/>
    </ligand>
</feature>
<organism>
    <name type="scientific">Ruegeria pomeroyi (strain ATCC 700808 / DSM 15171 / DSS-3)</name>
    <name type="common">Silicibacter pomeroyi</name>
    <dbReference type="NCBI Taxonomy" id="246200"/>
    <lineage>
        <taxon>Bacteria</taxon>
        <taxon>Pseudomonadati</taxon>
        <taxon>Pseudomonadota</taxon>
        <taxon>Alphaproteobacteria</taxon>
        <taxon>Rhodobacterales</taxon>
        <taxon>Roseobacteraceae</taxon>
        <taxon>Ruegeria</taxon>
    </lineage>
</organism>
<dbReference type="EC" id="6.1.1.7" evidence="1"/>
<dbReference type="EMBL" id="CP000031">
    <property type="protein sequence ID" value="AAV95305.1"/>
    <property type="molecule type" value="Genomic_DNA"/>
</dbReference>
<dbReference type="RefSeq" id="WP_011047760.1">
    <property type="nucleotide sequence ID" value="NC_003911.12"/>
</dbReference>
<dbReference type="SMR" id="Q5LRU1"/>
<dbReference type="STRING" id="246200.SPO2033"/>
<dbReference type="PaxDb" id="246200-SPO2033"/>
<dbReference type="KEGG" id="sil:SPO2033"/>
<dbReference type="eggNOG" id="COG0013">
    <property type="taxonomic scope" value="Bacteria"/>
</dbReference>
<dbReference type="HOGENOM" id="CLU_004485_1_1_5"/>
<dbReference type="OrthoDB" id="9803884at2"/>
<dbReference type="Proteomes" id="UP000001023">
    <property type="component" value="Chromosome"/>
</dbReference>
<dbReference type="GO" id="GO:0005829">
    <property type="term" value="C:cytosol"/>
    <property type="evidence" value="ECO:0007669"/>
    <property type="project" value="TreeGrafter"/>
</dbReference>
<dbReference type="GO" id="GO:0004813">
    <property type="term" value="F:alanine-tRNA ligase activity"/>
    <property type="evidence" value="ECO:0007669"/>
    <property type="project" value="UniProtKB-UniRule"/>
</dbReference>
<dbReference type="GO" id="GO:0002161">
    <property type="term" value="F:aminoacyl-tRNA deacylase activity"/>
    <property type="evidence" value="ECO:0007669"/>
    <property type="project" value="TreeGrafter"/>
</dbReference>
<dbReference type="GO" id="GO:0005524">
    <property type="term" value="F:ATP binding"/>
    <property type="evidence" value="ECO:0007669"/>
    <property type="project" value="UniProtKB-UniRule"/>
</dbReference>
<dbReference type="GO" id="GO:0000049">
    <property type="term" value="F:tRNA binding"/>
    <property type="evidence" value="ECO:0007669"/>
    <property type="project" value="UniProtKB-KW"/>
</dbReference>
<dbReference type="GO" id="GO:0008270">
    <property type="term" value="F:zinc ion binding"/>
    <property type="evidence" value="ECO:0007669"/>
    <property type="project" value="UniProtKB-UniRule"/>
</dbReference>
<dbReference type="GO" id="GO:0006419">
    <property type="term" value="P:alanyl-tRNA aminoacylation"/>
    <property type="evidence" value="ECO:0007669"/>
    <property type="project" value="UniProtKB-UniRule"/>
</dbReference>
<dbReference type="GO" id="GO:0045892">
    <property type="term" value="P:negative regulation of DNA-templated transcription"/>
    <property type="evidence" value="ECO:0007669"/>
    <property type="project" value="TreeGrafter"/>
</dbReference>
<dbReference type="CDD" id="cd00673">
    <property type="entry name" value="AlaRS_core"/>
    <property type="match status" value="1"/>
</dbReference>
<dbReference type="FunFam" id="3.10.310.40:FF:000001">
    <property type="entry name" value="Alanine--tRNA ligase"/>
    <property type="match status" value="1"/>
</dbReference>
<dbReference type="FunFam" id="3.30.54.20:FF:000001">
    <property type="entry name" value="Alanine--tRNA ligase"/>
    <property type="match status" value="1"/>
</dbReference>
<dbReference type="FunFam" id="3.30.930.10:FF:000004">
    <property type="entry name" value="Alanine--tRNA ligase"/>
    <property type="match status" value="1"/>
</dbReference>
<dbReference type="FunFam" id="3.30.980.10:FF:000004">
    <property type="entry name" value="Alanine--tRNA ligase, cytoplasmic"/>
    <property type="match status" value="1"/>
</dbReference>
<dbReference type="Gene3D" id="2.40.30.130">
    <property type="match status" value="1"/>
</dbReference>
<dbReference type="Gene3D" id="3.10.310.40">
    <property type="match status" value="1"/>
</dbReference>
<dbReference type="Gene3D" id="3.30.54.20">
    <property type="match status" value="1"/>
</dbReference>
<dbReference type="Gene3D" id="6.10.250.550">
    <property type="match status" value="1"/>
</dbReference>
<dbReference type="Gene3D" id="3.30.930.10">
    <property type="entry name" value="Bira Bifunctional Protein, Domain 2"/>
    <property type="match status" value="1"/>
</dbReference>
<dbReference type="Gene3D" id="3.30.980.10">
    <property type="entry name" value="Threonyl-trna Synthetase, Chain A, domain 2"/>
    <property type="match status" value="1"/>
</dbReference>
<dbReference type="HAMAP" id="MF_00036_B">
    <property type="entry name" value="Ala_tRNA_synth_B"/>
    <property type="match status" value="1"/>
</dbReference>
<dbReference type="InterPro" id="IPR045864">
    <property type="entry name" value="aa-tRNA-synth_II/BPL/LPL"/>
</dbReference>
<dbReference type="InterPro" id="IPR002318">
    <property type="entry name" value="Ala-tRNA-lgiase_IIc"/>
</dbReference>
<dbReference type="InterPro" id="IPR018162">
    <property type="entry name" value="Ala-tRNA-ligase_IIc_anticod-bd"/>
</dbReference>
<dbReference type="InterPro" id="IPR018165">
    <property type="entry name" value="Ala-tRNA-synth_IIc_core"/>
</dbReference>
<dbReference type="InterPro" id="IPR018164">
    <property type="entry name" value="Ala-tRNA-synth_IIc_N"/>
</dbReference>
<dbReference type="InterPro" id="IPR050058">
    <property type="entry name" value="Ala-tRNA_ligase"/>
</dbReference>
<dbReference type="InterPro" id="IPR023033">
    <property type="entry name" value="Ala_tRNA_ligase_euk/bac"/>
</dbReference>
<dbReference type="InterPro" id="IPR003156">
    <property type="entry name" value="DHHA1_dom"/>
</dbReference>
<dbReference type="InterPro" id="IPR018163">
    <property type="entry name" value="Thr/Ala-tRNA-synth_IIc_edit"/>
</dbReference>
<dbReference type="InterPro" id="IPR009000">
    <property type="entry name" value="Transl_B-barrel_sf"/>
</dbReference>
<dbReference type="InterPro" id="IPR012947">
    <property type="entry name" value="tRNA_SAD"/>
</dbReference>
<dbReference type="NCBIfam" id="TIGR00344">
    <property type="entry name" value="alaS"/>
    <property type="match status" value="1"/>
</dbReference>
<dbReference type="PANTHER" id="PTHR11777:SF9">
    <property type="entry name" value="ALANINE--TRNA LIGASE, CYTOPLASMIC"/>
    <property type="match status" value="1"/>
</dbReference>
<dbReference type="PANTHER" id="PTHR11777">
    <property type="entry name" value="ALANYL-TRNA SYNTHETASE"/>
    <property type="match status" value="1"/>
</dbReference>
<dbReference type="Pfam" id="PF02272">
    <property type="entry name" value="DHHA1"/>
    <property type="match status" value="1"/>
</dbReference>
<dbReference type="Pfam" id="PF01411">
    <property type="entry name" value="tRNA-synt_2c"/>
    <property type="match status" value="1"/>
</dbReference>
<dbReference type="Pfam" id="PF07973">
    <property type="entry name" value="tRNA_SAD"/>
    <property type="match status" value="1"/>
</dbReference>
<dbReference type="PRINTS" id="PR00980">
    <property type="entry name" value="TRNASYNTHALA"/>
</dbReference>
<dbReference type="SMART" id="SM00863">
    <property type="entry name" value="tRNA_SAD"/>
    <property type="match status" value="1"/>
</dbReference>
<dbReference type="SUPFAM" id="SSF55681">
    <property type="entry name" value="Class II aaRS and biotin synthetases"/>
    <property type="match status" value="1"/>
</dbReference>
<dbReference type="SUPFAM" id="SSF101353">
    <property type="entry name" value="Putative anticodon-binding domain of alanyl-tRNA synthetase (AlaRS)"/>
    <property type="match status" value="1"/>
</dbReference>
<dbReference type="SUPFAM" id="SSF55186">
    <property type="entry name" value="ThrRS/AlaRS common domain"/>
    <property type="match status" value="1"/>
</dbReference>
<dbReference type="SUPFAM" id="SSF50447">
    <property type="entry name" value="Translation proteins"/>
    <property type="match status" value="1"/>
</dbReference>
<dbReference type="PROSITE" id="PS50860">
    <property type="entry name" value="AA_TRNA_LIGASE_II_ALA"/>
    <property type="match status" value="1"/>
</dbReference>